<accession>A4FVW2</accession>
<reference key="1">
    <citation type="submission" date="2007-03" db="EMBL/GenBank/DDBJ databases">
        <title>Complete sequence of chromosome of Methanococcus maripaludis C5.</title>
        <authorList>
            <consortium name="US DOE Joint Genome Institute"/>
            <person name="Copeland A."/>
            <person name="Lucas S."/>
            <person name="Lapidus A."/>
            <person name="Barry K."/>
            <person name="Glavina del Rio T."/>
            <person name="Dalin E."/>
            <person name="Tice H."/>
            <person name="Pitluck S."/>
            <person name="Chertkov O."/>
            <person name="Brettin T."/>
            <person name="Bruce D."/>
            <person name="Han C."/>
            <person name="Detter J.C."/>
            <person name="Schmutz J."/>
            <person name="Larimer F."/>
            <person name="Land M."/>
            <person name="Hauser L."/>
            <person name="Kyrpides N."/>
            <person name="Mikhailova N."/>
            <person name="Sieprawska-Lupa M."/>
            <person name="Whitman W.B."/>
            <person name="Richardson P."/>
        </authorList>
    </citation>
    <scope>NUCLEOTIDE SEQUENCE [LARGE SCALE GENOMIC DNA]</scope>
    <source>
        <strain>C5 / ATCC BAA-1333</strain>
    </source>
</reference>
<protein>
    <recommendedName>
        <fullName evidence="1">Tetrahydromethanopterin S-methyltransferase subunit B</fullName>
        <ecNumber evidence="1">7.2.1.4</ecNumber>
    </recommendedName>
    <alternativeName>
        <fullName evidence="1">N5-methyltetrahydromethanopterin--coenzyme M methyltransferase subunit B</fullName>
    </alternativeName>
</protein>
<dbReference type="EC" id="7.2.1.4" evidence="1"/>
<dbReference type="EMBL" id="CP000609">
    <property type="protein sequence ID" value="ABO34330.1"/>
    <property type="molecule type" value="Genomic_DNA"/>
</dbReference>
<dbReference type="RefSeq" id="WP_011867792.1">
    <property type="nucleotide sequence ID" value="NC_009135.1"/>
</dbReference>
<dbReference type="SMR" id="A4FVW2"/>
<dbReference type="STRING" id="402880.MmarC5_0013"/>
<dbReference type="GeneID" id="4928330"/>
<dbReference type="KEGG" id="mmq:MmarC5_0013"/>
<dbReference type="eggNOG" id="arCOG04867">
    <property type="taxonomic scope" value="Archaea"/>
</dbReference>
<dbReference type="HOGENOM" id="CLU_171544_0_0_2"/>
<dbReference type="OrthoDB" id="114034at2157"/>
<dbReference type="UniPathway" id="UPA00640">
    <property type="reaction ID" value="UER00698"/>
</dbReference>
<dbReference type="Proteomes" id="UP000000253">
    <property type="component" value="Chromosome"/>
</dbReference>
<dbReference type="GO" id="GO:0005886">
    <property type="term" value="C:plasma membrane"/>
    <property type="evidence" value="ECO:0007669"/>
    <property type="project" value="UniProtKB-SubCell"/>
</dbReference>
<dbReference type="GO" id="GO:0030269">
    <property type="term" value="F:tetrahydromethanopterin S-methyltransferase activity"/>
    <property type="evidence" value="ECO:0007669"/>
    <property type="project" value="UniProtKB-UniRule"/>
</dbReference>
<dbReference type="GO" id="GO:0019386">
    <property type="term" value="P:methanogenesis, from carbon dioxide"/>
    <property type="evidence" value="ECO:0007669"/>
    <property type="project" value="UniProtKB-UniRule"/>
</dbReference>
<dbReference type="GO" id="GO:0032259">
    <property type="term" value="P:methylation"/>
    <property type="evidence" value="ECO:0007669"/>
    <property type="project" value="UniProtKB-KW"/>
</dbReference>
<dbReference type="GO" id="GO:0006730">
    <property type="term" value="P:one-carbon metabolic process"/>
    <property type="evidence" value="ECO:0007669"/>
    <property type="project" value="UniProtKB-UniRule"/>
</dbReference>
<dbReference type="HAMAP" id="MF_01094">
    <property type="entry name" value="MtrB"/>
    <property type="match status" value="1"/>
</dbReference>
<dbReference type="InterPro" id="IPR008690">
    <property type="entry name" value="MtrB_MeTrfase"/>
</dbReference>
<dbReference type="NCBIfam" id="TIGR04166">
    <property type="entry name" value="methano_MtrB"/>
    <property type="match status" value="1"/>
</dbReference>
<dbReference type="NCBIfam" id="NF002129">
    <property type="entry name" value="PRK00965.1"/>
    <property type="match status" value="1"/>
</dbReference>
<dbReference type="Pfam" id="PF05440">
    <property type="entry name" value="MtrB"/>
    <property type="match status" value="1"/>
</dbReference>
<dbReference type="PIRSF" id="PIRSF005518">
    <property type="entry name" value="MtrB"/>
    <property type="match status" value="1"/>
</dbReference>
<sequence>MDIVKVCPEIQIAMDIDSGLIAEMRKDILVVDLHPVEDEINRLAQYAKALENSLDPRNSPMKAYAGREGTYKLAGMFQGMFFGFWVTMAILVLVTILAVKMNLSLIGL</sequence>
<name>MTRB_METM5</name>
<feature type="chain" id="PRO_1000064935" description="Tetrahydromethanopterin S-methyltransferase subunit B">
    <location>
        <begin position="1"/>
        <end position="108"/>
    </location>
</feature>
<feature type="transmembrane region" description="Helical" evidence="1">
    <location>
        <begin position="79"/>
        <end position="99"/>
    </location>
</feature>
<comment type="function">
    <text evidence="1">Part of a complex that catalyzes the formation of methyl-coenzyme M and tetrahydromethanopterin from coenzyme M and methyl-tetrahydromethanopterin. This is an energy-conserving, sodium-ion translocating step.</text>
</comment>
<comment type="catalytic activity">
    <reaction evidence="1">
        <text>5-methyl-5,6,7,8-tetrahydromethanopterin + coenzyme M + 2 Na(+)(in) = 5,6,7,8-tetrahydromethanopterin + methyl-coenzyme M + 2 Na(+)(out)</text>
        <dbReference type="Rhea" id="RHEA:53492"/>
        <dbReference type="ChEBI" id="CHEBI:29101"/>
        <dbReference type="ChEBI" id="CHEBI:58103"/>
        <dbReference type="ChEBI" id="CHEBI:58116"/>
        <dbReference type="ChEBI" id="CHEBI:58286"/>
        <dbReference type="ChEBI" id="CHEBI:58319"/>
        <dbReference type="EC" id="7.2.1.4"/>
    </reaction>
</comment>
<comment type="pathway">
    <text evidence="1">One-carbon metabolism; methanogenesis from CO(2); methyl-coenzyme M from 5,10-methylene-5,6,7,8-tetrahydromethanopterin: step 2/2.</text>
</comment>
<comment type="subunit">
    <text evidence="1">The complex is composed of 8 subunits; MtrA, MtrB, MtrC, MtrD, MtrE, MtrF, MtrG and MtrH.</text>
</comment>
<comment type="subcellular location">
    <subcellularLocation>
        <location evidence="1">Cell membrane</location>
        <topology evidence="1">Single-pass membrane protein</topology>
    </subcellularLocation>
</comment>
<comment type="similarity">
    <text evidence="1">Belongs to the MtrB family.</text>
</comment>
<proteinExistence type="inferred from homology"/>
<keyword id="KW-1003">Cell membrane</keyword>
<keyword id="KW-0472">Membrane</keyword>
<keyword id="KW-0484">Methanogenesis</keyword>
<keyword id="KW-0489">Methyltransferase</keyword>
<keyword id="KW-0554">One-carbon metabolism</keyword>
<keyword id="KW-0808">Transferase</keyword>
<keyword id="KW-1278">Translocase</keyword>
<keyword id="KW-0812">Transmembrane</keyword>
<keyword id="KW-1133">Transmembrane helix</keyword>
<organism>
    <name type="scientific">Methanococcus maripaludis (strain C5 / ATCC BAA-1333)</name>
    <dbReference type="NCBI Taxonomy" id="402880"/>
    <lineage>
        <taxon>Archaea</taxon>
        <taxon>Methanobacteriati</taxon>
        <taxon>Methanobacteriota</taxon>
        <taxon>Methanomada group</taxon>
        <taxon>Methanococci</taxon>
        <taxon>Methanococcales</taxon>
        <taxon>Methanococcaceae</taxon>
        <taxon>Methanococcus</taxon>
    </lineage>
</organism>
<evidence type="ECO:0000255" key="1">
    <source>
        <dbReference type="HAMAP-Rule" id="MF_01094"/>
    </source>
</evidence>
<gene>
    <name evidence="1" type="primary">mtrB</name>
    <name type="ordered locus">MmarC5_0013</name>
</gene>